<feature type="chain" id="PRO_0000218448" description="Probable metalloendopeptidase G1-type">
    <location>
        <begin position="1"/>
        <end position="626"/>
    </location>
</feature>
<feature type="active site" evidence="2">
    <location>
        <position position="45"/>
    </location>
</feature>
<feature type="binding site" evidence="2">
    <location>
        <position position="42"/>
    </location>
    <ligand>
        <name>Zn(2+)</name>
        <dbReference type="ChEBI" id="CHEBI:29105"/>
        <note>catalytic</note>
    </ligand>
</feature>
<feature type="binding site" evidence="2">
    <location>
        <position position="46"/>
    </location>
    <ligand>
        <name>Zn(2+)</name>
        <dbReference type="ChEBI" id="CHEBI:29105"/>
        <note>catalytic</note>
    </ligand>
</feature>
<organism>
    <name type="scientific">Fowlpox virus (strain NVSL)</name>
    <name type="common">FPV</name>
    <dbReference type="NCBI Taxonomy" id="928301"/>
    <lineage>
        <taxon>Viruses</taxon>
        <taxon>Varidnaviria</taxon>
        <taxon>Bamfordvirae</taxon>
        <taxon>Nucleocytoviricota</taxon>
        <taxon>Pokkesviricetes</taxon>
        <taxon>Chitovirales</taxon>
        <taxon>Poxviridae</taxon>
        <taxon>Chordopoxvirinae</taxon>
        <taxon>Avipoxvirus</taxon>
        <taxon>Fowlpox virus</taxon>
    </lineage>
</organism>
<name>PG085_FOWPN</name>
<protein>
    <recommendedName>
        <fullName>Probable metalloendopeptidase G1-type</fullName>
        <ecNumber>3.4.24.-</ecNumber>
    </recommendedName>
</protein>
<keyword id="KW-0378">Hydrolase</keyword>
<keyword id="KW-0479">Metal-binding</keyword>
<keyword id="KW-0482">Metalloprotease</keyword>
<keyword id="KW-0645">Protease</keyword>
<keyword id="KW-1185">Reference proteome</keyword>
<keyword id="KW-0862">Zinc</keyword>
<dbReference type="EC" id="3.4.24.-"/>
<dbReference type="EMBL" id="AF198100">
    <property type="protein sequence ID" value="AAF44425.1"/>
    <property type="molecule type" value="Genomic_DNA"/>
</dbReference>
<dbReference type="EMBL" id="AJ223385">
    <property type="protein sequence ID" value="CAA11300.1"/>
    <property type="molecule type" value="Genomic_DNA"/>
</dbReference>
<dbReference type="PIR" id="H48563">
    <property type="entry name" value="H48563"/>
</dbReference>
<dbReference type="RefSeq" id="NP_039044.1">
    <property type="nucleotide sequence ID" value="NC_002188.1"/>
</dbReference>
<dbReference type="SMR" id="Q9J5D0"/>
<dbReference type="GeneID" id="1486629"/>
<dbReference type="KEGG" id="vg:1486629"/>
<dbReference type="Proteomes" id="UP000008597">
    <property type="component" value="Segment"/>
</dbReference>
<dbReference type="GO" id="GO:0004222">
    <property type="term" value="F:metalloendopeptidase activity"/>
    <property type="evidence" value="ECO:0007669"/>
    <property type="project" value="InterPro"/>
</dbReference>
<dbReference type="GO" id="GO:0008270">
    <property type="term" value="F:zinc ion binding"/>
    <property type="evidence" value="ECO:0007669"/>
    <property type="project" value="InterPro"/>
</dbReference>
<dbReference type="GO" id="GO:0006508">
    <property type="term" value="P:proteolysis"/>
    <property type="evidence" value="ECO:0007669"/>
    <property type="project" value="UniProtKB-KW"/>
</dbReference>
<dbReference type="GO" id="GO:0019058">
    <property type="term" value="P:viral life cycle"/>
    <property type="evidence" value="ECO:0007669"/>
    <property type="project" value="InterPro"/>
</dbReference>
<dbReference type="Gene3D" id="3.30.830.10">
    <property type="entry name" value="Metalloenzyme, LuxS/M16 peptidase-like"/>
    <property type="match status" value="1"/>
</dbReference>
<dbReference type="InterPro" id="IPR011249">
    <property type="entry name" value="Metalloenz_LuxS/M16"/>
</dbReference>
<dbReference type="InterPro" id="IPR005072">
    <property type="entry name" value="Peptidase_M44"/>
</dbReference>
<dbReference type="Pfam" id="PF03410">
    <property type="entry name" value="Peptidase_M44"/>
    <property type="match status" value="1"/>
</dbReference>
<dbReference type="PIRSF" id="PIRSF015679">
    <property type="entry name" value="Peptidase_M44"/>
    <property type="match status" value="1"/>
</dbReference>
<dbReference type="SUPFAM" id="SSF63411">
    <property type="entry name" value="LuxS/MPP-like metallohydrolase"/>
    <property type="match status" value="1"/>
</dbReference>
<proteinExistence type="inferred from homology"/>
<organismHost>
    <name type="scientific">Vertebrata</name>
    <dbReference type="NCBI Taxonomy" id="7742"/>
</organismHost>
<evidence type="ECO:0000250" key="1"/>
<evidence type="ECO:0000255" key="2"/>
<evidence type="ECO:0000305" key="3"/>
<comment type="function">
    <text evidence="1">Seems to be involved in viral proteins maturation by cleavage at Ala-Gly-|-Xaa motifs.</text>
</comment>
<comment type="cofactor">
    <cofactor evidence="3">
        <name>Zn(2+)</name>
        <dbReference type="ChEBI" id="CHEBI:29105"/>
    </cofactor>
    <text evidence="3">Binds 1 zinc ion.</text>
</comment>
<comment type="similarity">
    <text evidence="3">Belongs to the peptidase M44 family.</text>
</comment>
<reference key="1">
    <citation type="journal article" date="2000" name="J. Virol.">
        <title>The genome of fowlpox virus.</title>
        <authorList>
            <person name="Afonso C.L."/>
            <person name="Tulman E.R."/>
            <person name="Lu Z."/>
            <person name="Zsak L."/>
            <person name="Kutish G.F."/>
            <person name="Rock D.L."/>
        </authorList>
    </citation>
    <scope>NUCLEOTIDE SEQUENCE [LARGE SCALE GENOMIC DNA]</scope>
</reference>
<reference key="2">
    <citation type="submission" date="1998-01" db="EMBL/GenBank/DDBJ databases">
        <authorList>
            <person name="Pollitt E."/>
            <person name="Skinner M.A."/>
            <person name="Heaphy S."/>
        </authorList>
    </citation>
    <scope>NUCLEOTIDE SEQUENCE [GENOMIC DNA] OF 286-626</scope>
    <source>
        <strain>FP-9 / Isolate HP-440</strain>
    </source>
</reference>
<sequence>MIQLNNGIRIFVNHSMKKDIYIGISDFGFEKDINDGILGIAHLLEHILISFDNKYFNANASTSRTYMSFWCVALQKRHYEDAIRTAISWFFDKKYILKTDFSRIVLENYITELENEYYYRTEMYHCMDVLAYLYGGDLYNGGRITMLERLPEIRNMLSNRMKFLSGKNIVIFVKRLTNNILTLLTNTFGSIPKYPIIIPLDPQIQDARRKIIMMPCPFYTLLIQVDNTMNNLLAIICLVENYNLIDYETISDKLYVCISFANEDQYEYLLYNIKDMDFNINRIELDLGEDYIMNLYINFPWLKNDIFEYIHTMNTKSAMLLADLKKNMHNSILEHKFMIIYPSFTKLLYNITDKQNHGILVVGDVSFTPEKDPSMHHSNKENNNNYSKTVTKRKSKYVMYRKTPTTNNIVIDYTDSSFFDYATFYHVMKSKYEKTNLFSRLKTSTGMCYKHCFDNDDLNELINSDTFIRYNSSKPAVLYQYILLAYFVTERDIKELVDYKDAIELDMKYYSKNKILFGKNTRYDIRTKSMFVCGLIKGRKLSEKVITDYMWKLKSLGLIYYLTSIKLGISNTFYIFAFTIFPEKVYNFFVGLKEITNRCLIVSNKNTKIEEDDYSSLNKQIVIGIK</sequence>
<accession>Q9J5D0</accession>
<accession>O72905</accession>
<gene>
    <name type="ordered locus">FPV081</name>
    <name type="ORF">FPG1L</name>
</gene>